<proteinExistence type="inferred from homology"/>
<comment type="function">
    <text evidence="1">Cell wall formation. Catalyzes the addition of glutamate to the nucleotide precursor UDP-N-acetylmuramoyl-L-alanine (UMA).</text>
</comment>
<comment type="catalytic activity">
    <reaction evidence="1">
        <text>UDP-N-acetyl-alpha-D-muramoyl-L-alanine + D-glutamate + ATP = UDP-N-acetyl-alpha-D-muramoyl-L-alanyl-D-glutamate + ADP + phosphate + H(+)</text>
        <dbReference type="Rhea" id="RHEA:16429"/>
        <dbReference type="ChEBI" id="CHEBI:15378"/>
        <dbReference type="ChEBI" id="CHEBI:29986"/>
        <dbReference type="ChEBI" id="CHEBI:30616"/>
        <dbReference type="ChEBI" id="CHEBI:43474"/>
        <dbReference type="ChEBI" id="CHEBI:83898"/>
        <dbReference type="ChEBI" id="CHEBI:83900"/>
        <dbReference type="ChEBI" id="CHEBI:456216"/>
        <dbReference type="EC" id="6.3.2.9"/>
    </reaction>
</comment>
<comment type="pathway">
    <text evidence="1">Cell wall biogenesis; peptidoglycan biosynthesis.</text>
</comment>
<comment type="subcellular location">
    <subcellularLocation>
        <location evidence="1">Cytoplasm</location>
    </subcellularLocation>
</comment>
<comment type="similarity">
    <text evidence="1">Belongs to the MurCDEF family.</text>
</comment>
<dbReference type="EC" id="6.3.2.9" evidence="1"/>
<dbReference type="EMBL" id="CP000614">
    <property type="protein sequence ID" value="ABO53545.1"/>
    <property type="molecule type" value="Genomic_DNA"/>
</dbReference>
<dbReference type="SMR" id="A4JB92"/>
<dbReference type="KEGG" id="bvi:Bcep1808_0533"/>
<dbReference type="eggNOG" id="COG0771">
    <property type="taxonomic scope" value="Bacteria"/>
</dbReference>
<dbReference type="HOGENOM" id="CLU_032540_1_1_4"/>
<dbReference type="UniPathway" id="UPA00219"/>
<dbReference type="Proteomes" id="UP000002287">
    <property type="component" value="Chromosome 1"/>
</dbReference>
<dbReference type="GO" id="GO:0005737">
    <property type="term" value="C:cytoplasm"/>
    <property type="evidence" value="ECO:0007669"/>
    <property type="project" value="UniProtKB-SubCell"/>
</dbReference>
<dbReference type="GO" id="GO:0005524">
    <property type="term" value="F:ATP binding"/>
    <property type="evidence" value="ECO:0007669"/>
    <property type="project" value="UniProtKB-UniRule"/>
</dbReference>
<dbReference type="GO" id="GO:0008764">
    <property type="term" value="F:UDP-N-acetylmuramoylalanine-D-glutamate ligase activity"/>
    <property type="evidence" value="ECO:0007669"/>
    <property type="project" value="UniProtKB-UniRule"/>
</dbReference>
<dbReference type="GO" id="GO:0051301">
    <property type="term" value="P:cell division"/>
    <property type="evidence" value="ECO:0007669"/>
    <property type="project" value="UniProtKB-KW"/>
</dbReference>
<dbReference type="GO" id="GO:0071555">
    <property type="term" value="P:cell wall organization"/>
    <property type="evidence" value="ECO:0007669"/>
    <property type="project" value="UniProtKB-KW"/>
</dbReference>
<dbReference type="GO" id="GO:0009252">
    <property type="term" value="P:peptidoglycan biosynthetic process"/>
    <property type="evidence" value="ECO:0007669"/>
    <property type="project" value="UniProtKB-UniRule"/>
</dbReference>
<dbReference type="GO" id="GO:0008360">
    <property type="term" value="P:regulation of cell shape"/>
    <property type="evidence" value="ECO:0007669"/>
    <property type="project" value="UniProtKB-KW"/>
</dbReference>
<dbReference type="Gene3D" id="3.90.190.20">
    <property type="entry name" value="Mur ligase, C-terminal domain"/>
    <property type="match status" value="1"/>
</dbReference>
<dbReference type="Gene3D" id="3.40.1190.10">
    <property type="entry name" value="Mur-like, catalytic domain"/>
    <property type="match status" value="1"/>
</dbReference>
<dbReference type="Gene3D" id="3.40.50.720">
    <property type="entry name" value="NAD(P)-binding Rossmann-like Domain"/>
    <property type="match status" value="1"/>
</dbReference>
<dbReference type="HAMAP" id="MF_00639">
    <property type="entry name" value="MurD"/>
    <property type="match status" value="1"/>
</dbReference>
<dbReference type="InterPro" id="IPR036565">
    <property type="entry name" value="Mur-like_cat_sf"/>
</dbReference>
<dbReference type="InterPro" id="IPR004101">
    <property type="entry name" value="Mur_ligase_C"/>
</dbReference>
<dbReference type="InterPro" id="IPR036615">
    <property type="entry name" value="Mur_ligase_C_dom_sf"/>
</dbReference>
<dbReference type="InterPro" id="IPR013221">
    <property type="entry name" value="Mur_ligase_cen"/>
</dbReference>
<dbReference type="InterPro" id="IPR005762">
    <property type="entry name" value="MurD"/>
</dbReference>
<dbReference type="NCBIfam" id="TIGR01087">
    <property type="entry name" value="murD"/>
    <property type="match status" value="1"/>
</dbReference>
<dbReference type="PANTHER" id="PTHR43692">
    <property type="entry name" value="UDP-N-ACETYLMURAMOYLALANINE--D-GLUTAMATE LIGASE"/>
    <property type="match status" value="1"/>
</dbReference>
<dbReference type="PANTHER" id="PTHR43692:SF1">
    <property type="entry name" value="UDP-N-ACETYLMURAMOYLALANINE--D-GLUTAMATE LIGASE"/>
    <property type="match status" value="1"/>
</dbReference>
<dbReference type="Pfam" id="PF02875">
    <property type="entry name" value="Mur_ligase_C"/>
    <property type="match status" value="1"/>
</dbReference>
<dbReference type="Pfam" id="PF08245">
    <property type="entry name" value="Mur_ligase_M"/>
    <property type="match status" value="1"/>
</dbReference>
<dbReference type="Pfam" id="PF21799">
    <property type="entry name" value="MurD-like_N"/>
    <property type="match status" value="1"/>
</dbReference>
<dbReference type="SUPFAM" id="SSF51984">
    <property type="entry name" value="MurCD N-terminal domain"/>
    <property type="match status" value="1"/>
</dbReference>
<dbReference type="SUPFAM" id="SSF53623">
    <property type="entry name" value="MurD-like peptide ligases, catalytic domain"/>
    <property type="match status" value="1"/>
</dbReference>
<dbReference type="SUPFAM" id="SSF53244">
    <property type="entry name" value="MurD-like peptide ligases, peptide-binding domain"/>
    <property type="match status" value="1"/>
</dbReference>
<reference key="1">
    <citation type="submission" date="2007-03" db="EMBL/GenBank/DDBJ databases">
        <title>Complete sequence of chromosome 1 of Burkholderia vietnamiensis G4.</title>
        <authorList>
            <consortium name="US DOE Joint Genome Institute"/>
            <person name="Copeland A."/>
            <person name="Lucas S."/>
            <person name="Lapidus A."/>
            <person name="Barry K."/>
            <person name="Detter J.C."/>
            <person name="Glavina del Rio T."/>
            <person name="Hammon N."/>
            <person name="Israni S."/>
            <person name="Dalin E."/>
            <person name="Tice H."/>
            <person name="Pitluck S."/>
            <person name="Chain P."/>
            <person name="Malfatti S."/>
            <person name="Shin M."/>
            <person name="Vergez L."/>
            <person name="Schmutz J."/>
            <person name="Larimer F."/>
            <person name="Land M."/>
            <person name="Hauser L."/>
            <person name="Kyrpides N."/>
            <person name="Tiedje J."/>
            <person name="Richardson P."/>
        </authorList>
    </citation>
    <scope>NUCLEOTIDE SEQUENCE [LARGE SCALE GENOMIC DNA]</scope>
    <source>
        <strain>G4 / LMG 22486</strain>
    </source>
</reference>
<feature type="chain" id="PRO_1000056877" description="UDP-N-acetylmuramoylalanine--D-glutamate ligase">
    <location>
        <begin position="1"/>
        <end position="503"/>
    </location>
</feature>
<feature type="binding site" evidence="1">
    <location>
        <begin position="129"/>
        <end position="135"/>
    </location>
    <ligand>
        <name>ATP</name>
        <dbReference type="ChEBI" id="CHEBI:30616"/>
    </ligand>
</feature>
<organism>
    <name type="scientific">Burkholderia vietnamiensis (strain G4 / LMG 22486)</name>
    <name type="common">Burkholderia cepacia (strain R1808)</name>
    <dbReference type="NCBI Taxonomy" id="269482"/>
    <lineage>
        <taxon>Bacteria</taxon>
        <taxon>Pseudomonadati</taxon>
        <taxon>Pseudomonadota</taxon>
        <taxon>Betaproteobacteria</taxon>
        <taxon>Burkholderiales</taxon>
        <taxon>Burkholderiaceae</taxon>
        <taxon>Burkholderia</taxon>
        <taxon>Burkholderia cepacia complex</taxon>
    </lineage>
</organism>
<name>MURD_BURVG</name>
<keyword id="KW-0067">ATP-binding</keyword>
<keyword id="KW-0131">Cell cycle</keyword>
<keyword id="KW-0132">Cell division</keyword>
<keyword id="KW-0133">Cell shape</keyword>
<keyword id="KW-0961">Cell wall biogenesis/degradation</keyword>
<keyword id="KW-0963">Cytoplasm</keyword>
<keyword id="KW-0436">Ligase</keyword>
<keyword id="KW-0547">Nucleotide-binding</keyword>
<keyword id="KW-0573">Peptidoglycan synthesis</keyword>
<evidence type="ECO:0000255" key="1">
    <source>
        <dbReference type="HAMAP-Rule" id="MF_00639"/>
    </source>
</evidence>
<protein>
    <recommendedName>
        <fullName evidence="1">UDP-N-acetylmuramoylalanine--D-glutamate ligase</fullName>
        <ecNumber evidence="1">6.3.2.9</ecNumber>
    </recommendedName>
    <alternativeName>
        <fullName evidence="1">D-glutamic acid-adding enzyme</fullName>
    </alternativeName>
    <alternativeName>
        <fullName evidence="1">UDP-N-acetylmuramoyl-L-alanyl-D-glutamate synthetase</fullName>
    </alternativeName>
</protein>
<sequence length="503" mass="52752">MFGDRQRPMVLVLGLGESGLAIARWCARHGCRLRIADTREAPPNLAALQAEGIDAEFVGGPFTPALLDGGIDIVGLSPGLSPLEPALAALLAAASERAIAVWGELEFFAQALRALGTSGYQPKVLAITGTNGKTTTTSLTGLLCQRAGKKVAVAGNISPAMLDRLASAIDETALPDVWVLELSSFQLETARTFAPDAAAILNITQDHLDWHGSFDAYAAAKGRIFGATTTRVLNRDDAAVMKFAPAAGAADAARTVTFGLGEPTRDGDYGLSRDNGIAWLVEAIDRDAPDETTTTRRRKRDGAHTPDIAHKRLMPVDALRIRGLHNAANALAAFALARAIDLPAAPLLHALREYRGEAHRVEVIATIDDVDYVDDSKGTNVGATVAALDGLAQKIVLIAGGDGKGQDFAPLVAPVARWCRAVMLIGRDAPALRATLADTGVPLADHATLEGAVRAAAELAEPGDAVLLSPACASLDMFRNYAHRADVFRAAVDEIAIDKGATP</sequence>
<accession>A4JB92</accession>
<gene>
    <name evidence="1" type="primary">murD</name>
    <name type="ordered locus">Bcep1808_0533</name>
</gene>